<proteinExistence type="inferred from homology"/>
<reference key="1">
    <citation type="journal article" date="2005" name="Genome Res.">
        <title>Comparative and functional genomic analyses of the pathogenicity of phytopathogen Xanthomonas campestris pv. campestris.</title>
        <authorList>
            <person name="Qian W."/>
            <person name="Jia Y."/>
            <person name="Ren S.-X."/>
            <person name="He Y.-Q."/>
            <person name="Feng J.-X."/>
            <person name="Lu L.-F."/>
            <person name="Sun Q."/>
            <person name="Ying G."/>
            <person name="Tang D.-J."/>
            <person name="Tang H."/>
            <person name="Wu W."/>
            <person name="Hao P."/>
            <person name="Wang L."/>
            <person name="Jiang B.-L."/>
            <person name="Zeng S."/>
            <person name="Gu W.-Y."/>
            <person name="Lu G."/>
            <person name="Rong L."/>
            <person name="Tian Y."/>
            <person name="Yao Z."/>
            <person name="Fu G."/>
            <person name="Chen B."/>
            <person name="Fang R."/>
            <person name="Qiang B."/>
            <person name="Chen Z."/>
            <person name="Zhao G.-P."/>
            <person name="Tang J.-L."/>
            <person name="He C."/>
        </authorList>
    </citation>
    <scope>NUCLEOTIDE SEQUENCE [LARGE SCALE GENOMIC DNA]</scope>
    <source>
        <strain>8004</strain>
    </source>
</reference>
<organism>
    <name type="scientific">Xanthomonas campestris pv. campestris (strain 8004)</name>
    <dbReference type="NCBI Taxonomy" id="314565"/>
    <lineage>
        <taxon>Bacteria</taxon>
        <taxon>Pseudomonadati</taxon>
        <taxon>Pseudomonadota</taxon>
        <taxon>Gammaproteobacteria</taxon>
        <taxon>Lysobacterales</taxon>
        <taxon>Lysobacteraceae</taxon>
        <taxon>Xanthomonas</taxon>
    </lineage>
</organism>
<gene>
    <name evidence="1" type="primary">tpm</name>
    <name type="ordered locus">XC_2843</name>
</gene>
<dbReference type="EC" id="2.1.1.67" evidence="1"/>
<dbReference type="EMBL" id="CP000050">
    <property type="protein sequence ID" value="AAY49892.1"/>
    <property type="molecule type" value="Genomic_DNA"/>
</dbReference>
<dbReference type="RefSeq" id="WP_011036586.1">
    <property type="nucleotide sequence ID" value="NZ_CP155948.1"/>
</dbReference>
<dbReference type="SMR" id="Q4UST1"/>
<dbReference type="KEGG" id="xcb:XC_2843"/>
<dbReference type="HOGENOM" id="CLU_085515_1_0_6"/>
<dbReference type="Proteomes" id="UP000000420">
    <property type="component" value="Chromosome"/>
</dbReference>
<dbReference type="GO" id="GO:0005737">
    <property type="term" value="C:cytoplasm"/>
    <property type="evidence" value="ECO:0007669"/>
    <property type="project" value="UniProtKB-SubCell"/>
</dbReference>
<dbReference type="GO" id="GO:0008119">
    <property type="term" value="F:thiopurine S-methyltransferase activity"/>
    <property type="evidence" value="ECO:0007669"/>
    <property type="project" value="UniProtKB-UniRule"/>
</dbReference>
<dbReference type="GO" id="GO:0032259">
    <property type="term" value="P:methylation"/>
    <property type="evidence" value="ECO:0007669"/>
    <property type="project" value="UniProtKB-KW"/>
</dbReference>
<dbReference type="GO" id="GO:0010038">
    <property type="term" value="P:response to metal ion"/>
    <property type="evidence" value="ECO:0007669"/>
    <property type="project" value="InterPro"/>
</dbReference>
<dbReference type="FunFam" id="3.40.50.150:FF:000101">
    <property type="entry name" value="Thiopurine S-methyltransferase"/>
    <property type="match status" value="1"/>
</dbReference>
<dbReference type="Gene3D" id="3.40.50.150">
    <property type="entry name" value="Vaccinia Virus protein VP39"/>
    <property type="match status" value="1"/>
</dbReference>
<dbReference type="HAMAP" id="MF_00812">
    <property type="entry name" value="Thiopur_methtran"/>
    <property type="match status" value="1"/>
</dbReference>
<dbReference type="InterPro" id="IPR029063">
    <property type="entry name" value="SAM-dependent_MTases_sf"/>
</dbReference>
<dbReference type="InterPro" id="IPR022474">
    <property type="entry name" value="Thiopur_S-MeTfrase_Se/Te_detox"/>
</dbReference>
<dbReference type="InterPro" id="IPR025835">
    <property type="entry name" value="Thiopurine_S-MeTrfase"/>
</dbReference>
<dbReference type="InterPro" id="IPR008854">
    <property type="entry name" value="TPMT"/>
</dbReference>
<dbReference type="NCBIfam" id="NF009732">
    <property type="entry name" value="PRK13255.1"/>
    <property type="match status" value="1"/>
</dbReference>
<dbReference type="NCBIfam" id="TIGR03840">
    <property type="entry name" value="TMPT_Se_Te"/>
    <property type="match status" value="1"/>
</dbReference>
<dbReference type="PANTHER" id="PTHR10259">
    <property type="entry name" value="THIOPURINE S-METHYLTRANSFERASE"/>
    <property type="match status" value="1"/>
</dbReference>
<dbReference type="PANTHER" id="PTHR10259:SF11">
    <property type="entry name" value="THIOPURINE S-METHYLTRANSFERASE"/>
    <property type="match status" value="1"/>
</dbReference>
<dbReference type="Pfam" id="PF05724">
    <property type="entry name" value="TPMT"/>
    <property type="match status" value="1"/>
</dbReference>
<dbReference type="PIRSF" id="PIRSF023956">
    <property type="entry name" value="Thiopurine_S-methyltransferase"/>
    <property type="match status" value="1"/>
</dbReference>
<dbReference type="SUPFAM" id="SSF53335">
    <property type="entry name" value="S-adenosyl-L-methionine-dependent methyltransferases"/>
    <property type="match status" value="1"/>
</dbReference>
<dbReference type="PROSITE" id="PS51585">
    <property type="entry name" value="SAM_MT_TPMT"/>
    <property type="match status" value="1"/>
</dbReference>
<protein>
    <recommendedName>
        <fullName evidence="1">Thiopurine S-methyltransferase</fullName>
        <ecNumber evidence="1">2.1.1.67</ecNumber>
    </recommendedName>
    <alternativeName>
        <fullName evidence="1">Thiopurine methyltransferase</fullName>
    </alternativeName>
</protein>
<evidence type="ECO:0000255" key="1">
    <source>
        <dbReference type="HAMAP-Rule" id="MF_00812"/>
    </source>
</evidence>
<name>TPMT_XANC8</name>
<comment type="catalytic activity">
    <reaction evidence="1">
        <text>S-adenosyl-L-methionine + a thiopurine = S-adenosyl-L-homocysteine + a thiopurine S-methylether.</text>
        <dbReference type="EC" id="2.1.1.67"/>
    </reaction>
</comment>
<comment type="subcellular location">
    <subcellularLocation>
        <location evidence="1">Cytoplasm</location>
    </subcellularLocation>
</comment>
<comment type="similarity">
    <text evidence="1">Belongs to the class I-like SAM-binding methyltransferase superfamily. TPMT family.</text>
</comment>
<keyword id="KW-0963">Cytoplasm</keyword>
<keyword id="KW-0489">Methyltransferase</keyword>
<keyword id="KW-0949">S-adenosyl-L-methionine</keyword>
<keyword id="KW-0808">Transferase</keyword>
<sequence>MDTDFWLQRWQDGQTGFHQDEVMPLLQKHWPALQLPAHARVLVPLCGKTLDLHWLAAQGHRVLGVEISPLAVTQFFDDAGLQPQRHTSRAGEHCIAGPIEIICGDAFTLDASVLGDCTAVYDRAALVALPAALRQRYLETVYARLPAGCRGLLITLDYPQAEKAGPPFSVDAAEVHALFGTQWKVQELEHRDILDQEPRFRADGVTALSTGVYRLQRD</sequence>
<accession>Q4UST1</accession>
<feature type="chain" id="PRO_1000047229" description="Thiopurine S-methyltransferase">
    <location>
        <begin position="1"/>
        <end position="218"/>
    </location>
</feature>
<feature type="binding site" evidence="1">
    <location>
        <position position="10"/>
    </location>
    <ligand>
        <name>S-adenosyl-L-methionine</name>
        <dbReference type="ChEBI" id="CHEBI:59789"/>
    </ligand>
</feature>
<feature type="binding site" evidence="1">
    <location>
        <position position="45"/>
    </location>
    <ligand>
        <name>S-adenosyl-L-methionine</name>
        <dbReference type="ChEBI" id="CHEBI:59789"/>
    </ligand>
</feature>
<feature type="binding site" evidence="1">
    <location>
        <position position="66"/>
    </location>
    <ligand>
        <name>S-adenosyl-L-methionine</name>
        <dbReference type="ChEBI" id="CHEBI:59789"/>
    </ligand>
</feature>
<feature type="binding site" evidence="1">
    <location>
        <position position="123"/>
    </location>
    <ligand>
        <name>S-adenosyl-L-methionine</name>
        <dbReference type="ChEBI" id="CHEBI:59789"/>
    </ligand>
</feature>